<keyword id="KW-0150">Chloroplast</keyword>
<keyword id="KW-0934">Plastid</keyword>
<keyword id="KW-0687">Ribonucleoprotein</keyword>
<keyword id="KW-0689">Ribosomal protein</keyword>
<gene>
    <name evidence="1" type="primary">rpl33</name>
</gene>
<sequence length="66" mass="7834">MAKGKDVRIRVILECTSCVRNDLNKESRGISRYITQKNRHNTPSRLELRKFCPYCYKHTIHGEIKK</sequence>
<comment type="subcellular location">
    <subcellularLocation>
        <location>Plastid</location>
        <location>Chloroplast</location>
    </subcellularLocation>
</comment>
<comment type="similarity">
    <text evidence="1">Belongs to the bacterial ribosomal protein bL33 family.</text>
</comment>
<dbReference type="EMBL" id="DQ887676">
    <property type="protein sequence ID" value="ABH88318.1"/>
    <property type="molecule type" value="Genomic_DNA"/>
</dbReference>
<dbReference type="RefSeq" id="YP_784407.1">
    <property type="nucleotide sequence ID" value="NC_008456.1"/>
</dbReference>
<dbReference type="GeneID" id="4363593"/>
<dbReference type="GO" id="GO:0009507">
    <property type="term" value="C:chloroplast"/>
    <property type="evidence" value="ECO:0007669"/>
    <property type="project" value="UniProtKB-SubCell"/>
</dbReference>
<dbReference type="GO" id="GO:1990904">
    <property type="term" value="C:ribonucleoprotein complex"/>
    <property type="evidence" value="ECO:0007669"/>
    <property type="project" value="UniProtKB-KW"/>
</dbReference>
<dbReference type="GO" id="GO:0005840">
    <property type="term" value="C:ribosome"/>
    <property type="evidence" value="ECO:0007669"/>
    <property type="project" value="UniProtKB-KW"/>
</dbReference>
<dbReference type="GO" id="GO:0003735">
    <property type="term" value="F:structural constituent of ribosome"/>
    <property type="evidence" value="ECO:0007669"/>
    <property type="project" value="InterPro"/>
</dbReference>
<dbReference type="GO" id="GO:0006412">
    <property type="term" value="P:translation"/>
    <property type="evidence" value="ECO:0007669"/>
    <property type="project" value="UniProtKB-UniRule"/>
</dbReference>
<dbReference type="FunFam" id="2.20.28.120:FF:000004">
    <property type="entry name" value="50S ribosomal protein L33, chloroplastic"/>
    <property type="match status" value="1"/>
</dbReference>
<dbReference type="Gene3D" id="2.20.28.120">
    <property type="entry name" value="Ribosomal protein L33"/>
    <property type="match status" value="1"/>
</dbReference>
<dbReference type="HAMAP" id="MF_00294">
    <property type="entry name" value="Ribosomal_bL33"/>
    <property type="match status" value="1"/>
</dbReference>
<dbReference type="InterPro" id="IPR001705">
    <property type="entry name" value="Ribosomal_bL33"/>
</dbReference>
<dbReference type="InterPro" id="IPR018264">
    <property type="entry name" value="Ribosomal_bL33_CS"/>
</dbReference>
<dbReference type="InterPro" id="IPR038584">
    <property type="entry name" value="Ribosomal_bL33_sf"/>
</dbReference>
<dbReference type="InterPro" id="IPR011332">
    <property type="entry name" value="Ribosomal_zn-bd"/>
</dbReference>
<dbReference type="NCBIfam" id="NF001764">
    <property type="entry name" value="PRK00504.1"/>
    <property type="match status" value="1"/>
</dbReference>
<dbReference type="NCBIfam" id="NF001860">
    <property type="entry name" value="PRK00595.1"/>
    <property type="match status" value="1"/>
</dbReference>
<dbReference type="NCBIfam" id="TIGR01023">
    <property type="entry name" value="rpmG_bact"/>
    <property type="match status" value="1"/>
</dbReference>
<dbReference type="PANTHER" id="PTHR43168">
    <property type="entry name" value="50S RIBOSOMAL PROTEIN L33, CHLOROPLASTIC"/>
    <property type="match status" value="1"/>
</dbReference>
<dbReference type="PANTHER" id="PTHR43168:SF2">
    <property type="entry name" value="LARGE RIBOSOMAL SUBUNIT PROTEIN BL33C"/>
    <property type="match status" value="1"/>
</dbReference>
<dbReference type="Pfam" id="PF00471">
    <property type="entry name" value="Ribosomal_L33"/>
    <property type="match status" value="1"/>
</dbReference>
<dbReference type="SUPFAM" id="SSF57829">
    <property type="entry name" value="Zn-binding ribosomal proteins"/>
    <property type="match status" value="1"/>
</dbReference>
<dbReference type="PROSITE" id="PS00582">
    <property type="entry name" value="RIBOSOMAL_L33"/>
    <property type="match status" value="1"/>
</dbReference>
<proteinExistence type="inferred from homology"/>
<name>RK33_DRIGR</name>
<feature type="chain" id="PRO_0000276500" description="Large ribosomal subunit protein bL33c">
    <location>
        <begin position="1"/>
        <end position="66"/>
    </location>
</feature>
<evidence type="ECO:0000255" key="1">
    <source>
        <dbReference type="HAMAP-Rule" id="MF_00294"/>
    </source>
</evidence>
<evidence type="ECO:0000305" key="2"/>
<accession>Q06GX6</accession>
<reference key="1">
    <citation type="journal article" date="2006" name="BMC Evol. Biol.">
        <title>Complete plastid genome sequences of Drimys, Liriodendron, and Piper: implications for the phylogenetic relationships of magnoliids.</title>
        <authorList>
            <person name="Cai Z."/>
            <person name="Penaflor C."/>
            <person name="Kuehl J.V."/>
            <person name="Leebens-Mack J."/>
            <person name="Carlson J.E."/>
            <person name="dePamphilis C.W."/>
            <person name="Boore J.L."/>
            <person name="Jansen R.K."/>
        </authorList>
    </citation>
    <scope>NUCLEOTIDE SEQUENCE [LARGE SCALE GENOMIC DNA]</scope>
</reference>
<organism>
    <name type="scientific">Drimys granadensis</name>
    <dbReference type="NCBI Taxonomy" id="224735"/>
    <lineage>
        <taxon>Eukaryota</taxon>
        <taxon>Viridiplantae</taxon>
        <taxon>Streptophyta</taxon>
        <taxon>Embryophyta</taxon>
        <taxon>Tracheophyta</taxon>
        <taxon>Spermatophyta</taxon>
        <taxon>Magnoliopsida</taxon>
        <taxon>Magnoliidae</taxon>
        <taxon>Canellales</taxon>
        <taxon>Winteraceae</taxon>
        <taxon>Drimys</taxon>
    </lineage>
</organism>
<protein>
    <recommendedName>
        <fullName evidence="1">Large ribosomal subunit protein bL33c</fullName>
    </recommendedName>
    <alternativeName>
        <fullName evidence="2">50S ribosomal protein L33, chloroplastic</fullName>
    </alternativeName>
</protein>
<geneLocation type="chloroplast"/>